<comment type="function">
    <text evidence="1">Catalyzes the anti-1,4-elimination of the C-3 phosphate and the C-6 proR hydrogen from 5-enolpyruvylshikimate-3-phosphate (EPSP) to yield chorismate, which is the branch point compound that serves as the starting substrate for the three terminal pathways of aromatic amino acid biosynthesis. This reaction introduces a second double bond into the aromatic ring system.</text>
</comment>
<comment type="catalytic activity">
    <reaction evidence="1">
        <text>5-O-(1-carboxyvinyl)-3-phosphoshikimate = chorismate + phosphate</text>
        <dbReference type="Rhea" id="RHEA:21020"/>
        <dbReference type="ChEBI" id="CHEBI:29748"/>
        <dbReference type="ChEBI" id="CHEBI:43474"/>
        <dbReference type="ChEBI" id="CHEBI:57701"/>
        <dbReference type="EC" id="4.2.3.5"/>
    </reaction>
</comment>
<comment type="cofactor">
    <cofactor evidence="1">
        <name>FMNH2</name>
        <dbReference type="ChEBI" id="CHEBI:57618"/>
    </cofactor>
    <text evidence="1">Reduced FMN (FMNH(2)).</text>
</comment>
<comment type="pathway">
    <text evidence="1">Metabolic intermediate biosynthesis; chorismate biosynthesis; chorismate from D-erythrose 4-phosphate and phosphoenolpyruvate: step 7/7.</text>
</comment>
<comment type="subunit">
    <text evidence="1">Homotetramer.</text>
</comment>
<comment type="similarity">
    <text evidence="1">Belongs to the chorismate synthase family.</text>
</comment>
<feature type="chain" id="PRO_1000022565" description="Chorismate synthase">
    <location>
        <begin position="1"/>
        <end position="362"/>
    </location>
</feature>
<feature type="binding site" evidence="1">
    <location>
        <position position="47"/>
    </location>
    <ligand>
        <name>NADP(+)</name>
        <dbReference type="ChEBI" id="CHEBI:58349"/>
    </ligand>
</feature>
<feature type="binding site" evidence="1">
    <location>
        <begin position="124"/>
        <end position="126"/>
    </location>
    <ligand>
        <name>FMN</name>
        <dbReference type="ChEBI" id="CHEBI:58210"/>
    </ligand>
</feature>
<feature type="binding site" evidence="1">
    <location>
        <position position="286"/>
    </location>
    <ligand>
        <name>FMN</name>
        <dbReference type="ChEBI" id="CHEBI:58210"/>
    </ligand>
</feature>
<feature type="binding site" evidence="1">
    <location>
        <begin position="301"/>
        <end position="305"/>
    </location>
    <ligand>
        <name>FMN</name>
        <dbReference type="ChEBI" id="CHEBI:58210"/>
    </ligand>
</feature>
<feature type="binding site" evidence="1">
    <location>
        <position position="327"/>
    </location>
    <ligand>
        <name>FMN</name>
        <dbReference type="ChEBI" id="CHEBI:58210"/>
    </ligand>
</feature>
<organism>
    <name type="scientific">Synechococcus sp. (strain WH7803)</name>
    <dbReference type="NCBI Taxonomy" id="32051"/>
    <lineage>
        <taxon>Bacteria</taxon>
        <taxon>Bacillati</taxon>
        <taxon>Cyanobacteriota</taxon>
        <taxon>Cyanophyceae</taxon>
        <taxon>Synechococcales</taxon>
        <taxon>Synechococcaceae</taxon>
        <taxon>Synechococcus</taxon>
    </lineage>
</organism>
<gene>
    <name evidence="1" type="primary">aroC</name>
    <name type="ordered locus">SynWH7803_0358</name>
</gene>
<evidence type="ECO:0000255" key="1">
    <source>
        <dbReference type="HAMAP-Rule" id="MF_00300"/>
    </source>
</evidence>
<name>AROC_SYNPW</name>
<proteinExistence type="inferred from homology"/>
<protein>
    <recommendedName>
        <fullName evidence="1">Chorismate synthase</fullName>
        <shortName evidence="1">CS</shortName>
        <ecNumber evidence="1">4.2.3.5</ecNumber>
    </recommendedName>
    <alternativeName>
        <fullName evidence="1">5-enolpyruvylshikimate-3-phosphate phospholyase</fullName>
    </alternativeName>
</protein>
<dbReference type="EC" id="4.2.3.5" evidence="1"/>
<dbReference type="EMBL" id="CT971583">
    <property type="protein sequence ID" value="CAK22784.1"/>
    <property type="molecule type" value="Genomic_DNA"/>
</dbReference>
<dbReference type="SMR" id="A5GIL9"/>
<dbReference type="STRING" id="32051.SynWH7803_0358"/>
<dbReference type="KEGG" id="syx:SynWH7803_0358"/>
<dbReference type="eggNOG" id="COG0082">
    <property type="taxonomic scope" value="Bacteria"/>
</dbReference>
<dbReference type="HOGENOM" id="CLU_034547_0_1_3"/>
<dbReference type="OrthoDB" id="9771806at2"/>
<dbReference type="UniPathway" id="UPA00053">
    <property type="reaction ID" value="UER00090"/>
</dbReference>
<dbReference type="Proteomes" id="UP000001566">
    <property type="component" value="Chromosome"/>
</dbReference>
<dbReference type="GO" id="GO:0005829">
    <property type="term" value="C:cytosol"/>
    <property type="evidence" value="ECO:0007669"/>
    <property type="project" value="TreeGrafter"/>
</dbReference>
<dbReference type="GO" id="GO:0004107">
    <property type="term" value="F:chorismate synthase activity"/>
    <property type="evidence" value="ECO:0007669"/>
    <property type="project" value="UniProtKB-UniRule"/>
</dbReference>
<dbReference type="GO" id="GO:0010181">
    <property type="term" value="F:FMN binding"/>
    <property type="evidence" value="ECO:0007669"/>
    <property type="project" value="TreeGrafter"/>
</dbReference>
<dbReference type="GO" id="GO:0008652">
    <property type="term" value="P:amino acid biosynthetic process"/>
    <property type="evidence" value="ECO:0007669"/>
    <property type="project" value="UniProtKB-KW"/>
</dbReference>
<dbReference type="GO" id="GO:0009073">
    <property type="term" value="P:aromatic amino acid family biosynthetic process"/>
    <property type="evidence" value="ECO:0007669"/>
    <property type="project" value="UniProtKB-KW"/>
</dbReference>
<dbReference type="GO" id="GO:0009423">
    <property type="term" value="P:chorismate biosynthetic process"/>
    <property type="evidence" value="ECO:0007669"/>
    <property type="project" value="UniProtKB-UniRule"/>
</dbReference>
<dbReference type="CDD" id="cd07304">
    <property type="entry name" value="Chorismate_synthase"/>
    <property type="match status" value="1"/>
</dbReference>
<dbReference type="FunFam" id="3.60.150.10:FF:000003">
    <property type="entry name" value="Chorismate synthase"/>
    <property type="match status" value="1"/>
</dbReference>
<dbReference type="Gene3D" id="3.60.150.10">
    <property type="entry name" value="Chorismate synthase AroC"/>
    <property type="match status" value="1"/>
</dbReference>
<dbReference type="HAMAP" id="MF_00300">
    <property type="entry name" value="Chorismate_synth"/>
    <property type="match status" value="1"/>
</dbReference>
<dbReference type="InterPro" id="IPR000453">
    <property type="entry name" value="Chorismate_synth"/>
</dbReference>
<dbReference type="InterPro" id="IPR035904">
    <property type="entry name" value="Chorismate_synth_AroC_sf"/>
</dbReference>
<dbReference type="InterPro" id="IPR020541">
    <property type="entry name" value="Chorismate_synthase_CS"/>
</dbReference>
<dbReference type="NCBIfam" id="TIGR00033">
    <property type="entry name" value="aroC"/>
    <property type="match status" value="1"/>
</dbReference>
<dbReference type="NCBIfam" id="NF003793">
    <property type="entry name" value="PRK05382.1"/>
    <property type="match status" value="1"/>
</dbReference>
<dbReference type="PANTHER" id="PTHR21085">
    <property type="entry name" value="CHORISMATE SYNTHASE"/>
    <property type="match status" value="1"/>
</dbReference>
<dbReference type="PANTHER" id="PTHR21085:SF0">
    <property type="entry name" value="CHORISMATE SYNTHASE"/>
    <property type="match status" value="1"/>
</dbReference>
<dbReference type="Pfam" id="PF01264">
    <property type="entry name" value="Chorismate_synt"/>
    <property type="match status" value="1"/>
</dbReference>
<dbReference type="PIRSF" id="PIRSF001456">
    <property type="entry name" value="Chorismate_synth"/>
    <property type="match status" value="1"/>
</dbReference>
<dbReference type="SUPFAM" id="SSF103263">
    <property type="entry name" value="Chorismate synthase, AroC"/>
    <property type="match status" value="1"/>
</dbReference>
<dbReference type="PROSITE" id="PS00787">
    <property type="entry name" value="CHORISMATE_SYNTHASE_1"/>
    <property type="match status" value="1"/>
</dbReference>
<dbReference type="PROSITE" id="PS00788">
    <property type="entry name" value="CHORISMATE_SYNTHASE_2"/>
    <property type="match status" value="1"/>
</dbReference>
<dbReference type="PROSITE" id="PS00789">
    <property type="entry name" value="CHORISMATE_SYNTHASE_3"/>
    <property type="match status" value="1"/>
</dbReference>
<keyword id="KW-0028">Amino-acid biosynthesis</keyword>
<keyword id="KW-0057">Aromatic amino acid biosynthesis</keyword>
<keyword id="KW-0274">FAD</keyword>
<keyword id="KW-0285">Flavoprotein</keyword>
<keyword id="KW-0288">FMN</keyword>
<keyword id="KW-0456">Lyase</keyword>
<keyword id="KW-0521">NADP</keyword>
<keyword id="KW-1185">Reference proteome</keyword>
<reference key="1">
    <citation type="submission" date="2006-05" db="EMBL/GenBank/DDBJ databases">
        <authorList>
            <consortium name="Genoscope"/>
        </authorList>
    </citation>
    <scope>NUCLEOTIDE SEQUENCE [LARGE SCALE GENOMIC DNA]</scope>
    <source>
        <strain>WH7803</strain>
    </source>
</reference>
<sequence>MGSSFGTLFRISTFGESHGGGVGVILEGCPPRLELDPLAIQAELDRRRPGQSKITTPRKEADQVEILSGVMDGLTLGTPIAMVVRNKDQRPQDYKEVEVAFRPSHADATYQAKYGIQARSGGGRASARETIGRVAAGAIARQMLQRSHGTDVVAWVKRIHDLEAQVDASTVTREAVDANIVRCPDAEMADRMIDRIEAIGQDGDSCGGVIECVVRRPPVGLGMPVFDKLEADLAKAVMSLPATKGFEIGSGFAGTLLRGSEHNDAFLPSDDGRLRTASNNSGGIQGGISNGEPIVIRVAFKPTATIRKEQQTINDRGEATTLAAKGRHDPCVLPRAVPMVEAMVNLVLADHLLRQQGQCSLW</sequence>
<accession>A5GIL9</accession>